<gene>
    <name type="primary">Emc4</name>
    <name type="synonym">Tmem85</name>
</gene>
<comment type="function">
    <text evidence="1">Part of the endoplasmic reticulum membrane protein complex (EMC) that enables the energy-independent insertion into endoplasmic reticulum membranes of newly synthesized membrane proteins. Preferentially accommodates proteins with transmembrane domains that are weakly hydrophobic or contain destabilizing features such as charged and aromatic residues. Involved in the cotranslational insertion of multi-pass membrane proteins in which stop-transfer membrane-anchor sequences become ER membrane spanning helices. It is also required for the post-translational insertion of tail-anchored/TA proteins in endoplasmic reticulum membranes. By mediating the proper cotranslational insertion of N-terminal transmembrane domains in an N-exo topology, with translocated N-terminus in the lumen of the ER, controls the topology of multi-pass membrane proteins like the G protein-coupled receptors. By regulating the insertion of various proteins in membranes, it is indirectly involved in many cellular processes.</text>
</comment>
<comment type="subunit">
    <text evidence="1">Component of the ER membrane protein complex (EMC).</text>
</comment>
<comment type="subcellular location">
    <subcellularLocation>
        <location evidence="1">Endoplasmic reticulum membrane</location>
        <topology evidence="1">Multi-pass membrane protein</topology>
    </subcellularLocation>
    <text evidence="1">Could also be a single-pass transmembrane protein with cytosolic N-terminus and lumenal C-terminus.</text>
</comment>
<comment type="similarity">
    <text evidence="2">Belongs to the EMC4 family.</text>
</comment>
<keyword id="KW-0007">Acetylation</keyword>
<keyword id="KW-0053">Apoptosis</keyword>
<keyword id="KW-0256">Endoplasmic reticulum</keyword>
<keyword id="KW-0472">Membrane</keyword>
<keyword id="KW-0597">Phosphoprotein</keyword>
<keyword id="KW-1185">Reference proteome</keyword>
<keyword id="KW-0812">Transmembrane</keyword>
<keyword id="KW-1133">Transmembrane helix</keyword>
<name>EMC4_MOUSE</name>
<accession>Q9CZX9</accession>
<accession>A2AGJ7</accession>
<accession>Q9D1D9</accession>
<feature type="initiator methionine" description="Removed" evidence="1">
    <location>
        <position position="1"/>
    </location>
</feature>
<feature type="chain" id="PRO_0000251915" description="ER membrane protein complex subunit 4">
    <location>
        <begin position="2"/>
        <end position="183"/>
    </location>
</feature>
<feature type="topological domain" description="Cytoplasmic" evidence="1">
    <location>
        <begin position="2"/>
        <end position="66"/>
    </location>
</feature>
<feature type="transmembrane region" description="Helical" evidence="1">
    <location>
        <begin position="67"/>
        <end position="87"/>
    </location>
</feature>
<feature type="topological domain" description="Lumenal" evidence="1">
    <location>
        <begin position="88"/>
        <end position="98"/>
    </location>
</feature>
<feature type="transmembrane region" description="Helical" evidence="1">
    <location>
        <begin position="99"/>
        <end position="120"/>
    </location>
</feature>
<feature type="topological domain" description="Cytoplasmic" evidence="1">
    <location>
        <begin position="121"/>
        <end position="127"/>
    </location>
</feature>
<feature type="transmembrane region" description="Helical" evidence="1">
    <location>
        <begin position="128"/>
        <end position="148"/>
    </location>
</feature>
<feature type="topological domain" description="Lumenal" evidence="1">
    <location>
        <begin position="149"/>
        <end position="183"/>
    </location>
</feature>
<feature type="modified residue" description="N-acetylthreonine" evidence="1">
    <location>
        <position position="2"/>
    </location>
</feature>
<feature type="modified residue" description="Phosphoserine" evidence="3">
    <location>
        <position position="36"/>
    </location>
</feature>
<feature type="sequence conflict" description="In Ref. 1; BAB22926." evidence="2" ref="1">
    <original>A</original>
    <variation>R</variation>
    <location>
        <position position="9"/>
    </location>
</feature>
<proteinExistence type="evidence at protein level"/>
<reference key="1">
    <citation type="journal article" date="2005" name="Science">
        <title>The transcriptional landscape of the mammalian genome.</title>
        <authorList>
            <person name="Carninci P."/>
            <person name="Kasukawa T."/>
            <person name="Katayama S."/>
            <person name="Gough J."/>
            <person name="Frith M.C."/>
            <person name="Maeda N."/>
            <person name="Oyama R."/>
            <person name="Ravasi T."/>
            <person name="Lenhard B."/>
            <person name="Wells C."/>
            <person name="Kodzius R."/>
            <person name="Shimokawa K."/>
            <person name="Bajic V.B."/>
            <person name="Brenner S.E."/>
            <person name="Batalov S."/>
            <person name="Forrest A.R."/>
            <person name="Zavolan M."/>
            <person name="Davis M.J."/>
            <person name="Wilming L.G."/>
            <person name="Aidinis V."/>
            <person name="Allen J.E."/>
            <person name="Ambesi-Impiombato A."/>
            <person name="Apweiler R."/>
            <person name="Aturaliya R.N."/>
            <person name="Bailey T.L."/>
            <person name="Bansal M."/>
            <person name="Baxter L."/>
            <person name="Beisel K.W."/>
            <person name="Bersano T."/>
            <person name="Bono H."/>
            <person name="Chalk A.M."/>
            <person name="Chiu K.P."/>
            <person name="Choudhary V."/>
            <person name="Christoffels A."/>
            <person name="Clutterbuck D.R."/>
            <person name="Crowe M.L."/>
            <person name="Dalla E."/>
            <person name="Dalrymple B.P."/>
            <person name="de Bono B."/>
            <person name="Della Gatta G."/>
            <person name="di Bernardo D."/>
            <person name="Down T."/>
            <person name="Engstrom P."/>
            <person name="Fagiolini M."/>
            <person name="Faulkner G."/>
            <person name="Fletcher C.F."/>
            <person name="Fukushima T."/>
            <person name="Furuno M."/>
            <person name="Futaki S."/>
            <person name="Gariboldi M."/>
            <person name="Georgii-Hemming P."/>
            <person name="Gingeras T.R."/>
            <person name="Gojobori T."/>
            <person name="Green R.E."/>
            <person name="Gustincich S."/>
            <person name="Harbers M."/>
            <person name="Hayashi Y."/>
            <person name="Hensch T.K."/>
            <person name="Hirokawa N."/>
            <person name="Hill D."/>
            <person name="Huminiecki L."/>
            <person name="Iacono M."/>
            <person name="Ikeo K."/>
            <person name="Iwama A."/>
            <person name="Ishikawa T."/>
            <person name="Jakt M."/>
            <person name="Kanapin A."/>
            <person name="Katoh M."/>
            <person name="Kawasawa Y."/>
            <person name="Kelso J."/>
            <person name="Kitamura H."/>
            <person name="Kitano H."/>
            <person name="Kollias G."/>
            <person name="Krishnan S.P."/>
            <person name="Kruger A."/>
            <person name="Kummerfeld S.K."/>
            <person name="Kurochkin I.V."/>
            <person name="Lareau L.F."/>
            <person name="Lazarevic D."/>
            <person name="Lipovich L."/>
            <person name="Liu J."/>
            <person name="Liuni S."/>
            <person name="McWilliam S."/>
            <person name="Madan Babu M."/>
            <person name="Madera M."/>
            <person name="Marchionni L."/>
            <person name="Matsuda H."/>
            <person name="Matsuzawa S."/>
            <person name="Miki H."/>
            <person name="Mignone F."/>
            <person name="Miyake S."/>
            <person name="Morris K."/>
            <person name="Mottagui-Tabar S."/>
            <person name="Mulder N."/>
            <person name="Nakano N."/>
            <person name="Nakauchi H."/>
            <person name="Ng P."/>
            <person name="Nilsson R."/>
            <person name="Nishiguchi S."/>
            <person name="Nishikawa S."/>
            <person name="Nori F."/>
            <person name="Ohara O."/>
            <person name="Okazaki Y."/>
            <person name="Orlando V."/>
            <person name="Pang K.C."/>
            <person name="Pavan W.J."/>
            <person name="Pavesi G."/>
            <person name="Pesole G."/>
            <person name="Petrovsky N."/>
            <person name="Piazza S."/>
            <person name="Reed J."/>
            <person name="Reid J.F."/>
            <person name="Ring B.Z."/>
            <person name="Ringwald M."/>
            <person name="Rost B."/>
            <person name="Ruan Y."/>
            <person name="Salzberg S.L."/>
            <person name="Sandelin A."/>
            <person name="Schneider C."/>
            <person name="Schoenbach C."/>
            <person name="Sekiguchi K."/>
            <person name="Semple C.A."/>
            <person name="Seno S."/>
            <person name="Sessa L."/>
            <person name="Sheng Y."/>
            <person name="Shibata Y."/>
            <person name="Shimada H."/>
            <person name="Shimada K."/>
            <person name="Silva D."/>
            <person name="Sinclair B."/>
            <person name="Sperling S."/>
            <person name="Stupka E."/>
            <person name="Sugiura K."/>
            <person name="Sultana R."/>
            <person name="Takenaka Y."/>
            <person name="Taki K."/>
            <person name="Tammoja K."/>
            <person name="Tan S.L."/>
            <person name="Tang S."/>
            <person name="Taylor M.S."/>
            <person name="Tegner J."/>
            <person name="Teichmann S.A."/>
            <person name="Ueda H.R."/>
            <person name="van Nimwegen E."/>
            <person name="Verardo R."/>
            <person name="Wei C.L."/>
            <person name="Yagi K."/>
            <person name="Yamanishi H."/>
            <person name="Zabarovsky E."/>
            <person name="Zhu S."/>
            <person name="Zimmer A."/>
            <person name="Hide W."/>
            <person name="Bult C."/>
            <person name="Grimmond S.M."/>
            <person name="Teasdale R.D."/>
            <person name="Liu E.T."/>
            <person name="Brusic V."/>
            <person name="Quackenbush J."/>
            <person name="Wahlestedt C."/>
            <person name="Mattick J.S."/>
            <person name="Hume D.A."/>
            <person name="Kai C."/>
            <person name="Sasaki D."/>
            <person name="Tomaru Y."/>
            <person name="Fukuda S."/>
            <person name="Kanamori-Katayama M."/>
            <person name="Suzuki M."/>
            <person name="Aoki J."/>
            <person name="Arakawa T."/>
            <person name="Iida J."/>
            <person name="Imamura K."/>
            <person name="Itoh M."/>
            <person name="Kato T."/>
            <person name="Kawaji H."/>
            <person name="Kawagashira N."/>
            <person name="Kawashima T."/>
            <person name="Kojima M."/>
            <person name="Kondo S."/>
            <person name="Konno H."/>
            <person name="Nakano K."/>
            <person name="Ninomiya N."/>
            <person name="Nishio T."/>
            <person name="Okada M."/>
            <person name="Plessy C."/>
            <person name="Shibata K."/>
            <person name="Shiraki T."/>
            <person name="Suzuki S."/>
            <person name="Tagami M."/>
            <person name="Waki K."/>
            <person name="Watahiki A."/>
            <person name="Okamura-Oho Y."/>
            <person name="Suzuki H."/>
            <person name="Kawai J."/>
            <person name="Hayashizaki Y."/>
        </authorList>
    </citation>
    <scope>NUCLEOTIDE SEQUENCE [LARGE SCALE MRNA]</scope>
    <source>
        <strain>BALB/cJ</strain>
        <strain>C57BL/6J</strain>
        <tissue>Medulla oblongata</tissue>
    </source>
</reference>
<reference key="2">
    <citation type="journal article" date="2009" name="PLoS Biol.">
        <title>Lineage-specific biology revealed by a finished genome assembly of the mouse.</title>
        <authorList>
            <person name="Church D.M."/>
            <person name="Goodstadt L."/>
            <person name="Hillier L.W."/>
            <person name="Zody M.C."/>
            <person name="Goldstein S."/>
            <person name="She X."/>
            <person name="Bult C.J."/>
            <person name="Agarwala R."/>
            <person name="Cherry J.L."/>
            <person name="DiCuccio M."/>
            <person name="Hlavina W."/>
            <person name="Kapustin Y."/>
            <person name="Meric P."/>
            <person name="Maglott D."/>
            <person name="Birtle Z."/>
            <person name="Marques A.C."/>
            <person name="Graves T."/>
            <person name="Zhou S."/>
            <person name="Teague B."/>
            <person name="Potamousis K."/>
            <person name="Churas C."/>
            <person name="Place M."/>
            <person name="Herschleb J."/>
            <person name="Runnheim R."/>
            <person name="Forrest D."/>
            <person name="Amos-Landgraf J."/>
            <person name="Schwartz D.C."/>
            <person name="Cheng Z."/>
            <person name="Lindblad-Toh K."/>
            <person name="Eichler E.E."/>
            <person name="Ponting C.P."/>
        </authorList>
    </citation>
    <scope>NUCLEOTIDE SEQUENCE [LARGE SCALE GENOMIC DNA]</scope>
    <source>
        <strain>C57BL/6J</strain>
    </source>
</reference>
<reference key="3">
    <citation type="submission" date="2005-07" db="EMBL/GenBank/DDBJ databases">
        <authorList>
            <person name="Mural R.J."/>
            <person name="Adams M.D."/>
            <person name="Myers E.W."/>
            <person name="Smith H.O."/>
            <person name="Venter J.C."/>
        </authorList>
    </citation>
    <scope>NUCLEOTIDE SEQUENCE [LARGE SCALE GENOMIC DNA]</scope>
</reference>
<reference key="4">
    <citation type="journal article" date="2004" name="Genome Res.">
        <title>The status, quality, and expansion of the NIH full-length cDNA project: the Mammalian Gene Collection (MGC).</title>
        <authorList>
            <consortium name="The MGC Project Team"/>
        </authorList>
    </citation>
    <scope>NUCLEOTIDE SEQUENCE [LARGE SCALE MRNA]</scope>
    <source>
        <strain>C57BL/6J</strain>
        <tissue>Brain</tissue>
    </source>
</reference>
<reference key="5">
    <citation type="journal article" date="2010" name="Cell">
        <title>A tissue-specific atlas of mouse protein phosphorylation and expression.</title>
        <authorList>
            <person name="Huttlin E.L."/>
            <person name="Jedrychowski M.P."/>
            <person name="Elias J.E."/>
            <person name="Goswami T."/>
            <person name="Rad R."/>
            <person name="Beausoleil S.A."/>
            <person name="Villen J."/>
            <person name="Haas W."/>
            <person name="Sowa M.E."/>
            <person name="Gygi S.P."/>
        </authorList>
    </citation>
    <scope>PHOSPHORYLATION [LARGE SCALE ANALYSIS] AT SER-36</scope>
    <scope>IDENTIFICATION BY MASS SPECTROMETRY [LARGE SCALE ANALYSIS]</scope>
    <source>
        <tissue>Brain</tissue>
        <tissue>Brown adipose tissue</tissue>
        <tissue>Heart</tissue>
        <tissue>Kidney</tissue>
        <tissue>Liver</tissue>
        <tissue>Lung</tissue>
        <tissue>Pancreas</tissue>
        <tissue>Spleen</tissue>
        <tissue>Testis</tissue>
    </source>
</reference>
<sequence length="183" mass="20117">MTTQGGLVANRGRRFKWAIELSGPGGGSRGRSDRGSGQGDSLYPVGYLDKQVPDTSVQETDRILVEKRCWDIALGPLKQIPMNLFIMYMAGNTISIFPTMMVCMMAWRPIQALMAISATFKMLESSSQKFLQGLVYLIGNLMGLALAVYKCQSMGLLPTHASDWLAFIEPPERMEFSGGGLLL</sequence>
<organism>
    <name type="scientific">Mus musculus</name>
    <name type="common">Mouse</name>
    <dbReference type="NCBI Taxonomy" id="10090"/>
    <lineage>
        <taxon>Eukaryota</taxon>
        <taxon>Metazoa</taxon>
        <taxon>Chordata</taxon>
        <taxon>Craniata</taxon>
        <taxon>Vertebrata</taxon>
        <taxon>Euteleostomi</taxon>
        <taxon>Mammalia</taxon>
        <taxon>Eutheria</taxon>
        <taxon>Euarchontoglires</taxon>
        <taxon>Glires</taxon>
        <taxon>Rodentia</taxon>
        <taxon>Myomorpha</taxon>
        <taxon>Muroidea</taxon>
        <taxon>Muridae</taxon>
        <taxon>Murinae</taxon>
        <taxon>Mus</taxon>
        <taxon>Mus</taxon>
    </lineage>
</organism>
<dbReference type="EMBL" id="AK003668">
    <property type="protein sequence ID" value="BAB22926.1"/>
    <property type="molecule type" value="mRNA"/>
</dbReference>
<dbReference type="EMBL" id="AK012047">
    <property type="protein sequence ID" value="BAB27992.1"/>
    <property type="molecule type" value="mRNA"/>
</dbReference>
<dbReference type="EMBL" id="AK078165">
    <property type="protein sequence ID" value="BAC37155.1"/>
    <property type="molecule type" value="mRNA"/>
</dbReference>
<dbReference type="EMBL" id="AK167745">
    <property type="protein sequence ID" value="BAE39782.1"/>
    <property type="molecule type" value="mRNA"/>
</dbReference>
<dbReference type="EMBL" id="AL683897">
    <property type="status" value="NOT_ANNOTATED_CDS"/>
    <property type="molecule type" value="Genomic_DNA"/>
</dbReference>
<dbReference type="EMBL" id="CH466519">
    <property type="protein sequence ID" value="EDL27839.1"/>
    <property type="molecule type" value="Genomic_DNA"/>
</dbReference>
<dbReference type="EMBL" id="BC051926">
    <property type="protein sequence ID" value="AAH51926.1"/>
    <property type="molecule type" value="mRNA"/>
</dbReference>
<dbReference type="CCDS" id="CCDS16553.1"/>
<dbReference type="RefSeq" id="NP_080795.1">
    <property type="nucleotide sequence ID" value="NM_026519.4"/>
</dbReference>
<dbReference type="RefSeq" id="XP_030107859.1">
    <property type="nucleotide sequence ID" value="XM_030251999.2"/>
</dbReference>
<dbReference type="RefSeq" id="XP_030107860.1">
    <property type="nucleotide sequence ID" value="XM_030252000.2"/>
</dbReference>
<dbReference type="SMR" id="Q9CZX9"/>
<dbReference type="BioGRID" id="212612">
    <property type="interactions" value="5"/>
</dbReference>
<dbReference type="ComplexPortal" id="CPX-5882">
    <property type="entry name" value="Endoplasmic reticulum membrane complex, EMC8 variant"/>
</dbReference>
<dbReference type="ComplexPortal" id="CPX-5883">
    <property type="entry name" value="Endoplasmic reticulum membrane complex, EMC9 variant"/>
</dbReference>
<dbReference type="FunCoup" id="Q9CZX9">
    <property type="interactions" value="2710"/>
</dbReference>
<dbReference type="IntAct" id="Q9CZX9">
    <property type="interactions" value="2"/>
</dbReference>
<dbReference type="STRING" id="10090.ENSMUSP00000028551"/>
<dbReference type="iPTMnet" id="Q9CZX9"/>
<dbReference type="PhosphoSitePlus" id="Q9CZX9"/>
<dbReference type="SwissPalm" id="Q9CZX9"/>
<dbReference type="jPOST" id="Q9CZX9"/>
<dbReference type="PaxDb" id="10090-ENSMUSP00000028551"/>
<dbReference type="PeptideAtlas" id="Q9CZX9"/>
<dbReference type="ProteomicsDB" id="277856"/>
<dbReference type="Pumba" id="Q9CZX9"/>
<dbReference type="Antibodypedia" id="65253">
    <property type="antibodies" value="73 antibodies from 20 providers"/>
</dbReference>
<dbReference type="DNASU" id="68032"/>
<dbReference type="Ensembl" id="ENSMUST00000028551.4">
    <property type="protein sequence ID" value="ENSMUSP00000028551.4"/>
    <property type="gene ID" value="ENSMUSG00000027131.4"/>
</dbReference>
<dbReference type="GeneID" id="68032"/>
<dbReference type="KEGG" id="mmu:68032"/>
<dbReference type="UCSC" id="uc008loy.1">
    <property type="organism name" value="mouse"/>
</dbReference>
<dbReference type="AGR" id="MGI:1915282"/>
<dbReference type="CTD" id="51234"/>
<dbReference type="MGI" id="MGI:1915282">
    <property type="gene designation" value="Emc4"/>
</dbReference>
<dbReference type="VEuPathDB" id="HostDB:ENSMUSG00000027131"/>
<dbReference type="eggNOG" id="KOG3318">
    <property type="taxonomic scope" value="Eukaryota"/>
</dbReference>
<dbReference type="GeneTree" id="ENSGT00390000006970"/>
<dbReference type="HOGENOM" id="CLU_098404_0_1_1"/>
<dbReference type="InParanoid" id="Q9CZX9"/>
<dbReference type="OMA" id="FMMWMVG"/>
<dbReference type="OrthoDB" id="369569at2759"/>
<dbReference type="PhylomeDB" id="Q9CZX9"/>
<dbReference type="TreeFam" id="TF313750"/>
<dbReference type="BioGRID-ORCS" id="68032">
    <property type="hits" value="19 hits in 78 CRISPR screens"/>
</dbReference>
<dbReference type="CD-CODE" id="CE726F99">
    <property type="entry name" value="Postsynaptic density"/>
</dbReference>
<dbReference type="ChiTaRS" id="Emc4">
    <property type="organism name" value="mouse"/>
</dbReference>
<dbReference type="PRO" id="PR:Q9CZX9"/>
<dbReference type="Proteomes" id="UP000000589">
    <property type="component" value="Chromosome 2"/>
</dbReference>
<dbReference type="RNAct" id="Q9CZX9">
    <property type="molecule type" value="protein"/>
</dbReference>
<dbReference type="Bgee" id="ENSMUSG00000027131">
    <property type="expression patterns" value="Expressed in embryonic brain and 250 other cell types or tissues"/>
</dbReference>
<dbReference type="GO" id="GO:0072546">
    <property type="term" value="C:EMC complex"/>
    <property type="evidence" value="ECO:0000250"/>
    <property type="project" value="UniProtKB"/>
</dbReference>
<dbReference type="GO" id="GO:0005789">
    <property type="term" value="C:endoplasmic reticulum membrane"/>
    <property type="evidence" value="ECO:0000250"/>
    <property type="project" value="UniProtKB"/>
</dbReference>
<dbReference type="GO" id="GO:0016020">
    <property type="term" value="C:membrane"/>
    <property type="evidence" value="ECO:0000250"/>
    <property type="project" value="UniProtKB"/>
</dbReference>
<dbReference type="GO" id="GO:0032977">
    <property type="term" value="F:membrane insertase activity"/>
    <property type="evidence" value="ECO:0007669"/>
    <property type="project" value="Ensembl"/>
</dbReference>
<dbReference type="GO" id="GO:0006915">
    <property type="term" value="P:apoptotic process"/>
    <property type="evidence" value="ECO:0007669"/>
    <property type="project" value="UniProtKB-KW"/>
</dbReference>
<dbReference type="GO" id="GO:0045050">
    <property type="term" value="P:protein insertion into ER membrane by stop-transfer membrane-anchor sequence"/>
    <property type="evidence" value="ECO:0000250"/>
    <property type="project" value="UniProtKB"/>
</dbReference>
<dbReference type="GO" id="GO:0071816">
    <property type="term" value="P:tail-anchored membrane protein insertion into ER membrane"/>
    <property type="evidence" value="ECO:0000250"/>
    <property type="project" value="UniProtKB"/>
</dbReference>
<dbReference type="InterPro" id="IPR009445">
    <property type="entry name" value="TMEM85/Emc4"/>
</dbReference>
<dbReference type="PANTHER" id="PTHR19315">
    <property type="entry name" value="ER MEMBRANE PROTEIN COMPLEX SUBUNIT 4"/>
    <property type="match status" value="1"/>
</dbReference>
<dbReference type="Pfam" id="PF06417">
    <property type="entry name" value="EMC4"/>
    <property type="match status" value="1"/>
</dbReference>
<dbReference type="PIRSF" id="PIRSF017207">
    <property type="entry name" value="UCP017207_TM-p85"/>
    <property type="match status" value="1"/>
</dbReference>
<evidence type="ECO:0000250" key="1">
    <source>
        <dbReference type="UniProtKB" id="Q5J8M3"/>
    </source>
</evidence>
<evidence type="ECO:0000305" key="2"/>
<evidence type="ECO:0007744" key="3">
    <source>
    </source>
</evidence>
<protein>
    <recommendedName>
        <fullName>ER membrane protein complex subunit 4</fullName>
    </recommendedName>
    <alternativeName>
        <fullName>Transmembrane protein 85</fullName>
    </alternativeName>
</protein>